<proteinExistence type="evidence at protein level"/>
<name>LTO1_HUMAN</name>
<gene>
    <name evidence="7 9" type="primary">LTO1</name>
    <name evidence="9" type="synonym">ORAOV1</name>
    <name evidence="6" type="synonym">TAOS1</name>
</gene>
<sequence length="137" mass="15354">MAGSQDIFDAIVMADERFHGEGYREGYEEGSSLGVMEGRQHGTLHGAKIGSEIGCYQGFAFAWKCLLHSCTTEKDSRKMKVLESLIGMIQKFPYDDPTYDKLHEDLDKIRGKFKQFCSLLNVQPDFKISAEGSGLSF</sequence>
<evidence type="ECO:0000250" key="1">
    <source>
        <dbReference type="UniProtKB" id="P53846"/>
    </source>
</evidence>
<evidence type="ECO:0000269" key="2">
    <source>
    </source>
</evidence>
<evidence type="ECO:0000269" key="3">
    <source>
    </source>
</evidence>
<evidence type="ECO:0000269" key="4">
    <source>
    </source>
</evidence>
<evidence type="ECO:0000269" key="5">
    <source>
    </source>
</evidence>
<evidence type="ECO:0000303" key="6">
    <source>
    </source>
</evidence>
<evidence type="ECO:0000303" key="7">
    <source>
    </source>
</evidence>
<evidence type="ECO:0000305" key="8"/>
<evidence type="ECO:0000312" key="9">
    <source>
        <dbReference type="HGNC" id="HGNC:17589"/>
    </source>
</evidence>
<evidence type="ECO:0007744" key="10">
    <source>
    </source>
</evidence>
<evidence type="ECO:0007744" key="11">
    <source>
    </source>
</evidence>
<keyword id="KW-0007">Acetylation</keyword>
<keyword id="KW-0539">Nucleus</keyword>
<keyword id="KW-0597">Phosphoprotein</keyword>
<keyword id="KW-1267">Proteomics identification</keyword>
<keyword id="KW-1185">Reference proteome</keyword>
<reference key="1">
    <citation type="journal article" date="2002" name="Proc. Natl. Acad. Sci. U.S.A.">
        <title>High-resolution mapping of the 11q13 amplicon and identification of a gene, TAOS1, that is amplified and overexpressed in oral cancer cells.</title>
        <authorList>
            <person name="Huang X."/>
            <person name="Gollin S.M."/>
            <person name="Raja S."/>
            <person name="Godfrey T.E."/>
        </authorList>
    </citation>
    <scope>NUCLEOTIDE SEQUENCE [MRNA]</scope>
    <scope>TISSUE SPECIFICITY</scope>
</reference>
<reference key="2">
    <citation type="journal article" date="2004" name="Nat. Genet.">
        <title>Complete sequencing and characterization of 21,243 full-length human cDNAs.</title>
        <authorList>
            <person name="Ota T."/>
            <person name="Suzuki Y."/>
            <person name="Nishikawa T."/>
            <person name="Otsuki T."/>
            <person name="Sugiyama T."/>
            <person name="Irie R."/>
            <person name="Wakamatsu A."/>
            <person name="Hayashi K."/>
            <person name="Sato H."/>
            <person name="Nagai K."/>
            <person name="Kimura K."/>
            <person name="Makita H."/>
            <person name="Sekine M."/>
            <person name="Obayashi M."/>
            <person name="Nishi T."/>
            <person name="Shibahara T."/>
            <person name="Tanaka T."/>
            <person name="Ishii S."/>
            <person name="Yamamoto J."/>
            <person name="Saito K."/>
            <person name="Kawai Y."/>
            <person name="Isono Y."/>
            <person name="Nakamura Y."/>
            <person name="Nagahari K."/>
            <person name="Murakami K."/>
            <person name="Yasuda T."/>
            <person name="Iwayanagi T."/>
            <person name="Wagatsuma M."/>
            <person name="Shiratori A."/>
            <person name="Sudo H."/>
            <person name="Hosoiri T."/>
            <person name="Kaku Y."/>
            <person name="Kodaira H."/>
            <person name="Kondo H."/>
            <person name="Sugawara M."/>
            <person name="Takahashi M."/>
            <person name="Kanda K."/>
            <person name="Yokoi T."/>
            <person name="Furuya T."/>
            <person name="Kikkawa E."/>
            <person name="Omura Y."/>
            <person name="Abe K."/>
            <person name="Kamihara K."/>
            <person name="Katsuta N."/>
            <person name="Sato K."/>
            <person name="Tanikawa M."/>
            <person name="Yamazaki M."/>
            <person name="Ninomiya K."/>
            <person name="Ishibashi T."/>
            <person name="Yamashita H."/>
            <person name="Murakawa K."/>
            <person name="Fujimori K."/>
            <person name="Tanai H."/>
            <person name="Kimata M."/>
            <person name="Watanabe M."/>
            <person name="Hiraoka S."/>
            <person name="Chiba Y."/>
            <person name="Ishida S."/>
            <person name="Ono Y."/>
            <person name="Takiguchi S."/>
            <person name="Watanabe S."/>
            <person name="Yosida M."/>
            <person name="Hotuta T."/>
            <person name="Kusano J."/>
            <person name="Kanehori K."/>
            <person name="Takahashi-Fujii A."/>
            <person name="Hara H."/>
            <person name="Tanase T.-O."/>
            <person name="Nomura Y."/>
            <person name="Togiya S."/>
            <person name="Komai F."/>
            <person name="Hara R."/>
            <person name="Takeuchi K."/>
            <person name="Arita M."/>
            <person name="Imose N."/>
            <person name="Musashino K."/>
            <person name="Yuuki H."/>
            <person name="Oshima A."/>
            <person name="Sasaki N."/>
            <person name="Aotsuka S."/>
            <person name="Yoshikawa Y."/>
            <person name="Matsunawa H."/>
            <person name="Ichihara T."/>
            <person name="Shiohata N."/>
            <person name="Sano S."/>
            <person name="Moriya S."/>
            <person name="Momiyama H."/>
            <person name="Satoh N."/>
            <person name="Takami S."/>
            <person name="Terashima Y."/>
            <person name="Suzuki O."/>
            <person name="Nakagawa S."/>
            <person name="Senoh A."/>
            <person name="Mizoguchi H."/>
            <person name="Goto Y."/>
            <person name="Shimizu F."/>
            <person name="Wakebe H."/>
            <person name="Hishigaki H."/>
            <person name="Watanabe T."/>
            <person name="Sugiyama A."/>
            <person name="Takemoto M."/>
            <person name="Kawakami B."/>
            <person name="Yamazaki M."/>
            <person name="Watanabe K."/>
            <person name="Kumagai A."/>
            <person name="Itakura S."/>
            <person name="Fukuzumi Y."/>
            <person name="Fujimori Y."/>
            <person name="Komiyama M."/>
            <person name="Tashiro H."/>
            <person name="Tanigami A."/>
            <person name="Fujiwara T."/>
            <person name="Ono T."/>
            <person name="Yamada K."/>
            <person name="Fujii Y."/>
            <person name="Ozaki K."/>
            <person name="Hirao M."/>
            <person name="Ohmori Y."/>
            <person name="Kawabata A."/>
            <person name="Hikiji T."/>
            <person name="Kobatake N."/>
            <person name="Inagaki H."/>
            <person name="Ikema Y."/>
            <person name="Okamoto S."/>
            <person name="Okitani R."/>
            <person name="Kawakami T."/>
            <person name="Noguchi S."/>
            <person name="Itoh T."/>
            <person name="Shigeta K."/>
            <person name="Senba T."/>
            <person name="Matsumura K."/>
            <person name="Nakajima Y."/>
            <person name="Mizuno T."/>
            <person name="Morinaga M."/>
            <person name="Sasaki M."/>
            <person name="Togashi T."/>
            <person name="Oyama M."/>
            <person name="Hata H."/>
            <person name="Watanabe M."/>
            <person name="Komatsu T."/>
            <person name="Mizushima-Sugano J."/>
            <person name="Satoh T."/>
            <person name="Shirai Y."/>
            <person name="Takahashi Y."/>
            <person name="Nakagawa K."/>
            <person name="Okumura K."/>
            <person name="Nagase T."/>
            <person name="Nomura N."/>
            <person name="Kikuchi H."/>
            <person name="Masuho Y."/>
            <person name="Yamashita R."/>
            <person name="Nakai K."/>
            <person name="Yada T."/>
            <person name="Nakamura Y."/>
            <person name="Ohara O."/>
            <person name="Isogai T."/>
            <person name="Sugano S."/>
        </authorList>
    </citation>
    <scope>NUCLEOTIDE SEQUENCE [LARGE SCALE MRNA]</scope>
</reference>
<reference key="3">
    <citation type="submission" date="2005-07" db="EMBL/GenBank/DDBJ databases">
        <authorList>
            <person name="Mural R.J."/>
            <person name="Istrail S."/>
            <person name="Sutton G.G."/>
            <person name="Florea L."/>
            <person name="Halpern A.L."/>
            <person name="Mobarry C.M."/>
            <person name="Lippert R."/>
            <person name="Walenz B."/>
            <person name="Shatkay H."/>
            <person name="Dew I."/>
            <person name="Miller J.R."/>
            <person name="Flanigan M.J."/>
            <person name="Edwards N.J."/>
            <person name="Bolanos R."/>
            <person name="Fasulo D."/>
            <person name="Halldorsson B.V."/>
            <person name="Hannenhalli S."/>
            <person name="Turner R."/>
            <person name="Yooseph S."/>
            <person name="Lu F."/>
            <person name="Nusskern D.R."/>
            <person name="Shue B.C."/>
            <person name="Zheng X.H."/>
            <person name="Zhong F."/>
            <person name="Delcher A.L."/>
            <person name="Huson D.H."/>
            <person name="Kravitz S.A."/>
            <person name="Mouchard L."/>
            <person name="Reinert K."/>
            <person name="Remington K.A."/>
            <person name="Clark A.G."/>
            <person name="Waterman M.S."/>
            <person name="Eichler E.E."/>
            <person name="Adams M.D."/>
            <person name="Hunkapiller M.W."/>
            <person name="Myers E.W."/>
            <person name="Venter J.C."/>
        </authorList>
    </citation>
    <scope>NUCLEOTIDE SEQUENCE [LARGE SCALE GENOMIC DNA]</scope>
</reference>
<reference key="4">
    <citation type="journal article" date="2004" name="Genome Res.">
        <title>The status, quality, and expansion of the NIH full-length cDNA project: the Mammalian Gene Collection (MGC).</title>
        <authorList>
            <consortium name="The MGC Project Team"/>
        </authorList>
    </citation>
    <scope>NUCLEOTIDE SEQUENCE [LARGE SCALE MRNA]</scope>
    <source>
        <tissue>Melanoma</tissue>
        <tissue>Pancreatic carcinoma</tissue>
    </source>
</reference>
<reference key="5">
    <citation type="journal article" date="2011" name="Sci. Signal.">
        <title>System-wide temporal characterization of the proteome and phosphoproteome of human embryonic stem cell differentiation.</title>
        <authorList>
            <person name="Rigbolt K.T."/>
            <person name="Prokhorova T.A."/>
            <person name="Akimov V."/>
            <person name="Henningsen J."/>
            <person name="Johansen P.T."/>
            <person name="Kratchmarova I."/>
            <person name="Kassem M."/>
            <person name="Mann M."/>
            <person name="Olsen J.V."/>
            <person name="Blagoev B."/>
        </authorList>
    </citation>
    <scope>ACETYLATION [LARGE SCALE ANALYSIS] AT ALA-2</scope>
    <scope>PHOSPHORYLATION [LARGE SCALE ANALYSIS] AT SER-4</scope>
    <scope>CLEAVAGE OF INITIATOR METHIONINE [LARGE SCALE ANALYSIS]</scope>
    <scope>IDENTIFICATION BY MASS SPECTROMETRY [LARGE SCALE ANALYSIS]</scope>
</reference>
<reference key="6">
    <citation type="journal article" date="2012" name="Proc. Natl. Acad. Sci. U.S.A.">
        <title>N-terminal acetylome analyses and functional insights of the N-terminal acetyltransferase NatB.</title>
        <authorList>
            <person name="Van Damme P."/>
            <person name="Lasa M."/>
            <person name="Polevoda B."/>
            <person name="Gazquez C."/>
            <person name="Elosegui-Artola A."/>
            <person name="Kim D.S."/>
            <person name="De Juan-Pardo E."/>
            <person name="Demeyer K."/>
            <person name="Hole K."/>
            <person name="Larrea E."/>
            <person name="Timmerman E."/>
            <person name="Prieto J."/>
            <person name="Arnesen T."/>
            <person name="Sherman F."/>
            <person name="Gevaert K."/>
            <person name="Aldabe R."/>
        </authorList>
    </citation>
    <scope>ACETYLATION [LARGE SCALE ANALYSIS] AT ALA-2</scope>
    <scope>CLEAVAGE OF INITIATOR METHIONINE [LARGE SCALE ANALYSIS]</scope>
    <scope>IDENTIFICATION BY MASS SPECTROMETRY [LARGE SCALE ANALYSIS]</scope>
</reference>
<reference key="7">
    <citation type="journal article" date="2014" name="Oncogene">
        <title>The function of ORAOV1/LTO1, a gene that is overexpressed frequently in cancer: essential roles in the function and biogenesis of the ribosome.</title>
        <authorList>
            <person name="Zhai C."/>
            <person name="Li Y."/>
            <person name="Mascarenhas C."/>
            <person name="Lin Q."/>
            <person name="Li K."/>
            <person name="Vyrides I."/>
            <person name="Grant C.M."/>
            <person name="Panaretou B."/>
        </authorList>
    </citation>
    <scope>FUNCTION</scope>
    <scope>INTERACTION WITH YAE1</scope>
</reference>
<reference key="8">
    <citation type="journal article" date="2014" name="Oncotarget">
        <title>Frequent amplification of ORAOV1 gene in esophageal squamous cell cancer promotes an aggressive phenotype via proline metabolism and ROS production.</title>
        <authorList>
            <person name="Togashi Y."/>
            <person name="Arao T."/>
            <person name="Kato H."/>
            <person name="Matsumoto K."/>
            <person name="Terashima M."/>
            <person name="Hayashi H."/>
            <person name="de Velasco M.A."/>
            <person name="Fujita Y."/>
            <person name="Kimura H."/>
            <person name="Yasuda T."/>
            <person name="Shiozaki H."/>
            <person name="Nishio K."/>
        </authorList>
    </citation>
    <scope>FUNCTION</scope>
    <scope>TISSUE SPECIFICITY</scope>
    <scope>INTERACTION WITH PYCR1 AND PYCR2</scope>
</reference>
<reference key="9">
    <citation type="journal article" date="2015" name="Elife">
        <title>The deca-GX3 proteins Yae1-Lto1 function as adaptors recruiting the ABC protein Rli1 for iron-sulfur cluster insertion.</title>
        <authorList>
            <person name="Paul V.D."/>
            <person name="Muehlenhoff U."/>
            <person name="Stuempfig M."/>
            <person name="Seebacher J."/>
            <person name="Kugler K.G."/>
            <person name="Renicke C."/>
            <person name="Taxis C."/>
            <person name="Gavin A.C."/>
            <person name="Pierik A.J."/>
            <person name="Lill R."/>
        </authorList>
    </citation>
    <scope>FUNCTION</scope>
</reference>
<dbReference type="EMBL" id="AF503940">
    <property type="protein sequence ID" value="AAM97902.1"/>
    <property type="molecule type" value="mRNA"/>
</dbReference>
<dbReference type="EMBL" id="AK311918">
    <property type="protein sequence ID" value="BAG34859.1"/>
    <property type="molecule type" value="mRNA"/>
</dbReference>
<dbReference type="EMBL" id="CH471076">
    <property type="protein sequence ID" value="EAW74749.1"/>
    <property type="molecule type" value="Genomic_DNA"/>
</dbReference>
<dbReference type="EMBL" id="BC019024">
    <property type="protein sequence ID" value="AAH19024.4"/>
    <property type="molecule type" value="mRNA"/>
</dbReference>
<dbReference type="EMBL" id="BC065542">
    <property type="protein sequence ID" value="AAH65542.1"/>
    <property type="molecule type" value="mRNA"/>
</dbReference>
<dbReference type="CCDS" id="CCDS8192.1"/>
<dbReference type="RefSeq" id="NP_703152.1">
    <property type="nucleotide sequence ID" value="NM_153451.3"/>
</dbReference>
<dbReference type="RefSeq" id="XP_006718533.1">
    <property type="nucleotide sequence ID" value="XM_006718470.4"/>
</dbReference>
<dbReference type="RefSeq" id="XP_054224009.1">
    <property type="nucleotide sequence ID" value="XM_054368034.1"/>
</dbReference>
<dbReference type="SMR" id="Q8WV07"/>
<dbReference type="BioGRID" id="128622">
    <property type="interactions" value="23"/>
</dbReference>
<dbReference type="CORUM" id="Q8WV07"/>
<dbReference type="FunCoup" id="Q8WV07">
    <property type="interactions" value="972"/>
</dbReference>
<dbReference type="IntAct" id="Q8WV07">
    <property type="interactions" value="8"/>
</dbReference>
<dbReference type="STRING" id="9606.ENSP00000279147"/>
<dbReference type="iPTMnet" id="Q8WV07"/>
<dbReference type="PhosphoSitePlus" id="Q8WV07"/>
<dbReference type="BioMuta" id="ORAOV1"/>
<dbReference type="DMDM" id="85701377"/>
<dbReference type="jPOST" id="Q8WV07"/>
<dbReference type="MassIVE" id="Q8WV07"/>
<dbReference type="PaxDb" id="9606-ENSP00000279147"/>
<dbReference type="PeptideAtlas" id="Q8WV07"/>
<dbReference type="ProteomicsDB" id="74732"/>
<dbReference type="Pumba" id="Q8WV07"/>
<dbReference type="Antibodypedia" id="58325">
    <property type="antibodies" value="58 antibodies from 20 providers"/>
</dbReference>
<dbReference type="DNASU" id="220064"/>
<dbReference type="Ensembl" id="ENST00000279147.9">
    <property type="protein sequence ID" value="ENSP00000279147.5"/>
    <property type="gene ID" value="ENSG00000149716.13"/>
</dbReference>
<dbReference type="Ensembl" id="ENST00000535657.5">
    <property type="protein sequence ID" value="ENSP00000446129.1"/>
    <property type="gene ID" value="ENSG00000149716.13"/>
</dbReference>
<dbReference type="GeneID" id="220064"/>
<dbReference type="KEGG" id="hsa:220064"/>
<dbReference type="MANE-Select" id="ENST00000279147.9">
    <property type="protein sequence ID" value="ENSP00000279147.5"/>
    <property type="RefSeq nucleotide sequence ID" value="NM_153451.3"/>
    <property type="RefSeq protein sequence ID" value="NP_703152.1"/>
</dbReference>
<dbReference type="UCSC" id="uc001opc.4">
    <property type="organism name" value="human"/>
</dbReference>
<dbReference type="AGR" id="HGNC:17589"/>
<dbReference type="CTD" id="220064"/>
<dbReference type="DisGeNET" id="220064"/>
<dbReference type="GeneCards" id="LTO1"/>
<dbReference type="HGNC" id="HGNC:17589">
    <property type="gene designation" value="LTO1"/>
</dbReference>
<dbReference type="HPA" id="ENSG00000149716">
    <property type="expression patterns" value="Low tissue specificity"/>
</dbReference>
<dbReference type="MIM" id="607224">
    <property type="type" value="gene"/>
</dbReference>
<dbReference type="neXtProt" id="NX_Q8WV07"/>
<dbReference type="OpenTargets" id="ENSG00000149716"/>
<dbReference type="PharmGKB" id="PA38242"/>
<dbReference type="VEuPathDB" id="HostDB:ENSG00000149716"/>
<dbReference type="eggNOG" id="KOG4595">
    <property type="taxonomic scope" value="Eukaryota"/>
</dbReference>
<dbReference type="GeneTree" id="ENSGT00390000009426"/>
<dbReference type="HOGENOM" id="CLU_093191_0_1_1"/>
<dbReference type="InParanoid" id="Q8WV07"/>
<dbReference type="OMA" id="FKQVCSM"/>
<dbReference type="OrthoDB" id="48036at2759"/>
<dbReference type="PAN-GO" id="Q8WV07">
    <property type="GO annotations" value="1 GO annotation based on evolutionary models"/>
</dbReference>
<dbReference type="PhylomeDB" id="Q8WV07"/>
<dbReference type="TreeFam" id="TF332075"/>
<dbReference type="PathwayCommons" id="Q8WV07"/>
<dbReference type="SignaLink" id="Q8WV07"/>
<dbReference type="BioGRID-ORCS" id="220064">
    <property type="hits" value="804 hits in 1157 CRISPR screens"/>
</dbReference>
<dbReference type="ChiTaRS" id="ORAOV1">
    <property type="organism name" value="human"/>
</dbReference>
<dbReference type="GenomeRNAi" id="220064"/>
<dbReference type="Pharos" id="Q8WV07">
    <property type="development level" value="Tbio"/>
</dbReference>
<dbReference type="PRO" id="PR:Q8WV07"/>
<dbReference type="Proteomes" id="UP000005640">
    <property type="component" value="Chromosome 11"/>
</dbReference>
<dbReference type="RNAct" id="Q8WV07">
    <property type="molecule type" value="protein"/>
</dbReference>
<dbReference type="Bgee" id="ENSG00000149716">
    <property type="expression patterns" value="Expressed in right hemisphere of cerebellum and 111 other cell types or tissues"/>
</dbReference>
<dbReference type="ExpressionAtlas" id="Q8WV07">
    <property type="expression patterns" value="baseline and differential"/>
</dbReference>
<dbReference type="GO" id="GO:0005634">
    <property type="term" value="C:nucleus"/>
    <property type="evidence" value="ECO:0000250"/>
    <property type="project" value="UniProtKB"/>
</dbReference>
<dbReference type="GO" id="GO:0051604">
    <property type="term" value="P:protein maturation"/>
    <property type="evidence" value="ECO:0000314"/>
    <property type="project" value="UniProtKB"/>
</dbReference>
<dbReference type="GO" id="GO:0042273">
    <property type="term" value="P:ribosomal large subunit biogenesis"/>
    <property type="evidence" value="ECO:0000315"/>
    <property type="project" value="UniProtKB"/>
</dbReference>
<dbReference type="GO" id="GO:0000723">
    <property type="term" value="P:telomere maintenance"/>
    <property type="evidence" value="ECO:0000318"/>
    <property type="project" value="GO_Central"/>
</dbReference>
<dbReference type="GO" id="GO:0006413">
    <property type="term" value="P:translational initiation"/>
    <property type="evidence" value="ECO:0000315"/>
    <property type="project" value="UniProtKB"/>
</dbReference>
<dbReference type="InterPro" id="IPR019191">
    <property type="entry name" value="Essential_protein_Yae1_N"/>
</dbReference>
<dbReference type="InterPro" id="IPR052436">
    <property type="entry name" value="LTO1_adapter"/>
</dbReference>
<dbReference type="PANTHER" id="PTHR28532">
    <property type="entry name" value="GEO13458P1"/>
    <property type="match status" value="1"/>
</dbReference>
<dbReference type="PANTHER" id="PTHR28532:SF1">
    <property type="entry name" value="ORAL CANCER OVEREXPRESSED 1"/>
    <property type="match status" value="1"/>
</dbReference>
<dbReference type="Pfam" id="PF09811">
    <property type="entry name" value="Yae1_N"/>
    <property type="match status" value="1"/>
</dbReference>
<accession>Q8WV07</accession>
<accession>B2R4R2</accession>
<accession>Q8NFK0</accession>
<comment type="function">
    <text evidence="3 4 5">The complex LTO1:YAE1 functions as a target specific adapter that probably recruits apo-ABCE1 to the cytosolic iron-sulfur protein assembly (CIA) complex machinery (PubMed:26182403). May be required for biogenesis of the large ribosomal subunit and initiation of translation (PubMed:23318452). May play a role in the regulation of proline metabolism and ROS production (PubMed:24930674).</text>
</comment>
<comment type="subunit">
    <text evidence="3 4">Forms a complex with YAE1 (PubMed:23318452). Interacts with PYCR1 and PYCR2 (PubMed:24930674).</text>
</comment>
<comment type="interaction">
    <interactant intactId="EBI-12249832">
        <id>Q8WV07</id>
    </interactant>
    <interactant intactId="EBI-19954058">
        <id>O15499</id>
        <label>GSC2</label>
    </interactant>
    <organismsDiffer>false</organismsDiffer>
    <experiments>3</experiments>
</comment>
<comment type="interaction">
    <interactant intactId="EBI-12249832">
        <id>Q8WV07</id>
    </interactant>
    <interactant intactId="EBI-712905">
        <id>Q9NRH1</id>
        <label>YAE1</label>
    </interactant>
    <organismsDiffer>false</organismsDiffer>
    <experiments>8</experiments>
</comment>
<comment type="subcellular location">
    <subcellularLocation>
        <location evidence="1">Nucleus</location>
    </subcellularLocation>
</comment>
<comment type="tissue specificity">
    <text evidence="2 4">Widely expressed. Highly expressed in placenta, kidney and skeletal muscle.</text>
</comment>
<comment type="miscellaneous">
    <text>Amplified and overexpressed in oral cancer cells.</text>
</comment>
<comment type="similarity">
    <text evidence="8">Belongs to the LTO1 family.</text>
</comment>
<comment type="online information" name="Atlas of Genetics and Cytogenetics in Oncology and Haematology">
    <link uri="https://atlasgeneticsoncology.org/gene/41611/ORAOV1"/>
</comment>
<protein>
    <recommendedName>
        <fullName evidence="7 8">Protein LTO1 homolog</fullName>
    </recommendedName>
    <alternativeName>
        <fullName>Oral cancer-overexpressed protein 1</fullName>
    </alternativeName>
    <alternativeName>
        <fullName>Tumor-amplified and overexpressed sequence 1</fullName>
    </alternativeName>
</protein>
<feature type="initiator methionine" description="Removed" evidence="10 11">
    <location>
        <position position="1"/>
    </location>
</feature>
<feature type="chain" id="PRO_0000058075" description="Protein LTO1 homolog">
    <location>
        <begin position="2"/>
        <end position="137"/>
    </location>
</feature>
<feature type="region of interest" description="deca-GX3 motif; required for interaction with YAE1 and the CIA complex" evidence="1">
    <location>
        <begin position="22"/>
        <end position="58"/>
    </location>
</feature>
<feature type="modified residue" description="N-acetylalanine" evidence="10 11">
    <location>
        <position position="2"/>
    </location>
</feature>
<feature type="modified residue" description="Phosphoserine" evidence="10">
    <location>
        <position position="4"/>
    </location>
</feature>
<feature type="sequence variant" id="VAR_062231" description="In dbSNP:rs56107468.">
    <original>G</original>
    <variation>S</variation>
    <location>
        <position position="3"/>
    </location>
</feature>
<organism>
    <name type="scientific">Homo sapiens</name>
    <name type="common">Human</name>
    <dbReference type="NCBI Taxonomy" id="9606"/>
    <lineage>
        <taxon>Eukaryota</taxon>
        <taxon>Metazoa</taxon>
        <taxon>Chordata</taxon>
        <taxon>Craniata</taxon>
        <taxon>Vertebrata</taxon>
        <taxon>Euteleostomi</taxon>
        <taxon>Mammalia</taxon>
        <taxon>Eutheria</taxon>
        <taxon>Euarchontoglires</taxon>
        <taxon>Primates</taxon>
        <taxon>Haplorrhini</taxon>
        <taxon>Catarrhini</taxon>
        <taxon>Hominidae</taxon>
        <taxon>Homo</taxon>
    </lineage>
</organism>